<sequence length="390" mass="42199">MNIHEYQAKEIFREYGVPVPRGEVAFTGPEAREVAQRLGGDLWVVKAQIHAGGRGKAGGVKLARSLDEVEKIAEEMLGMTLVTHQTGPEGKKVEKVYVEEGADIQKEYYLGMVLDRSSEMPVMMASTEGGMEIEEVAAKTPEKIIKVAIDPTIGFQGFHGRKLAFGLGLAKEEIRPFIQFAEALYKVYMDKDANLIEINPLIKTGDGRFLALDAKMGFDDNALYKHPDIHEMRDLSEEDPVEVEAAKYGLSYVNLDGNVGCMVNGAGLAMATMDIIKHEGGEPANFLDVGGGANPDTVAKGFELILSDENVKSIFVNIFGGIVRCDRIANGILQATQQVEVNVPVVVRLDGTNAEEAAQILKNANIKNIIPATDLADGARKAVAAAKGEL</sequence>
<feature type="chain" id="PRO_1000082142" description="Succinate--CoA ligase [ADP-forming] subunit beta">
    <location>
        <begin position="1"/>
        <end position="390"/>
    </location>
</feature>
<feature type="domain" description="ATP-grasp" evidence="1">
    <location>
        <begin position="9"/>
        <end position="244"/>
    </location>
</feature>
<feature type="binding site" evidence="1">
    <location>
        <position position="46"/>
    </location>
    <ligand>
        <name>ATP</name>
        <dbReference type="ChEBI" id="CHEBI:30616"/>
    </ligand>
</feature>
<feature type="binding site" evidence="1">
    <location>
        <begin position="53"/>
        <end position="55"/>
    </location>
    <ligand>
        <name>ATP</name>
        <dbReference type="ChEBI" id="CHEBI:30616"/>
    </ligand>
</feature>
<feature type="binding site" evidence="1">
    <location>
        <position position="99"/>
    </location>
    <ligand>
        <name>ATP</name>
        <dbReference type="ChEBI" id="CHEBI:30616"/>
    </ligand>
</feature>
<feature type="binding site" evidence="1">
    <location>
        <position position="102"/>
    </location>
    <ligand>
        <name>ATP</name>
        <dbReference type="ChEBI" id="CHEBI:30616"/>
    </ligand>
</feature>
<feature type="binding site" evidence="1">
    <location>
        <position position="107"/>
    </location>
    <ligand>
        <name>ATP</name>
        <dbReference type="ChEBI" id="CHEBI:30616"/>
    </ligand>
</feature>
<feature type="binding site" evidence="1">
    <location>
        <position position="199"/>
    </location>
    <ligand>
        <name>Mg(2+)</name>
        <dbReference type="ChEBI" id="CHEBI:18420"/>
    </ligand>
</feature>
<feature type="binding site" evidence="1">
    <location>
        <position position="213"/>
    </location>
    <ligand>
        <name>Mg(2+)</name>
        <dbReference type="ChEBI" id="CHEBI:18420"/>
    </ligand>
</feature>
<feature type="binding site" evidence="1">
    <location>
        <position position="264"/>
    </location>
    <ligand>
        <name>substrate</name>
        <note>ligand shared with subunit alpha</note>
    </ligand>
</feature>
<feature type="binding site" evidence="1">
    <location>
        <begin position="321"/>
        <end position="323"/>
    </location>
    <ligand>
        <name>substrate</name>
        <note>ligand shared with subunit alpha</note>
    </ligand>
</feature>
<accession>A6Q391</accession>
<gene>
    <name evidence="1" type="primary">sucC</name>
    <name type="ordered locus">NIS_0838</name>
</gene>
<comment type="function">
    <text evidence="1">Succinyl-CoA synthetase functions in the citric acid cycle (TCA), coupling the hydrolysis of succinyl-CoA to the synthesis of either ATP or GTP and thus represents the only step of substrate-level phosphorylation in the TCA. The beta subunit provides nucleotide specificity of the enzyme and binds the substrate succinate, while the binding sites for coenzyme A and phosphate are found in the alpha subunit.</text>
</comment>
<comment type="catalytic activity">
    <reaction evidence="1">
        <text>succinate + ATP + CoA = succinyl-CoA + ADP + phosphate</text>
        <dbReference type="Rhea" id="RHEA:17661"/>
        <dbReference type="ChEBI" id="CHEBI:30031"/>
        <dbReference type="ChEBI" id="CHEBI:30616"/>
        <dbReference type="ChEBI" id="CHEBI:43474"/>
        <dbReference type="ChEBI" id="CHEBI:57287"/>
        <dbReference type="ChEBI" id="CHEBI:57292"/>
        <dbReference type="ChEBI" id="CHEBI:456216"/>
        <dbReference type="EC" id="6.2.1.5"/>
    </reaction>
    <physiologicalReaction direction="right-to-left" evidence="1">
        <dbReference type="Rhea" id="RHEA:17663"/>
    </physiologicalReaction>
</comment>
<comment type="catalytic activity">
    <reaction evidence="1">
        <text>GTP + succinate + CoA = succinyl-CoA + GDP + phosphate</text>
        <dbReference type="Rhea" id="RHEA:22120"/>
        <dbReference type="ChEBI" id="CHEBI:30031"/>
        <dbReference type="ChEBI" id="CHEBI:37565"/>
        <dbReference type="ChEBI" id="CHEBI:43474"/>
        <dbReference type="ChEBI" id="CHEBI:57287"/>
        <dbReference type="ChEBI" id="CHEBI:57292"/>
        <dbReference type="ChEBI" id="CHEBI:58189"/>
    </reaction>
    <physiologicalReaction direction="right-to-left" evidence="1">
        <dbReference type="Rhea" id="RHEA:22122"/>
    </physiologicalReaction>
</comment>
<comment type="cofactor">
    <cofactor evidence="1">
        <name>Mg(2+)</name>
        <dbReference type="ChEBI" id="CHEBI:18420"/>
    </cofactor>
    <text evidence="1">Binds 1 Mg(2+) ion per subunit.</text>
</comment>
<comment type="pathway">
    <text evidence="1">Carbohydrate metabolism; tricarboxylic acid cycle; succinate from succinyl-CoA (ligase route): step 1/1.</text>
</comment>
<comment type="subunit">
    <text evidence="1">Heterotetramer of two alpha and two beta subunits.</text>
</comment>
<comment type="similarity">
    <text evidence="1">Belongs to the succinate/malate CoA ligase beta subunit family.</text>
</comment>
<dbReference type="EC" id="6.2.1.5" evidence="1"/>
<dbReference type="EMBL" id="AP009178">
    <property type="protein sequence ID" value="BAF69950.1"/>
    <property type="molecule type" value="Genomic_DNA"/>
</dbReference>
<dbReference type="RefSeq" id="WP_012082213.1">
    <property type="nucleotide sequence ID" value="NC_009662.1"/>
</dbReference>
<dbReference type="SMR" id="A6Q391"/>
<dbReference type="FunCoup" id="A6Q391">
    <property type="interactions" value="441"/>
</dbReference>
<dbReference type="STRING" id="387092.NIS_0838"/>
<dbReference type="KEGG" id="nis:NIS_0838"/>
<dbReference type="eggNOG" id="COG0045">
    <property type="taxonomic scope" value="Bacteria"/>
</dbReference>
<dbReference type="HOGENOM" id="CLU_037430_0_2_7"/>
<dbReference type="InParanoid" id="A6Q391"/>
<dbReference type="OrthoDB" id="9802602at2"/>
<dbReference type="UniPathway" id="UPA00223">
    <property type="reaction ID" value="UER00999"/>
</dbReference>
<dbReference type="Proteomes" id="UP000001118">
    <property type="component" value="Chromosome"/>
</dbReference>
<dbReference type="GO" id="GO:0005829">
    <property type="term" value="C:cytosol"/>
    <property type="evidence" value="ECO:0007669"/>
    <property type="project" value="TreeGrafter"/>
</dbReference>
<dbReference type="GO" id="GO:0042709">
    <property type="term" value="C:succinate-CoA ligase complex"/>
    <property type="evidence" value="ECO:0007669"/>
    <property type="project" value="TreeGrafter"/>
</dbReference>
<dbReference type="GO" id="GO:0005524">
    <property type="term" value="F:ATP binding"/>
    <property type="evidence" value="ECO:0007669"/>
    <property type="project" value="UniProtKB-UniRule"/>
</dbReference>
<dbReference type="GO" id="GO:0000287">
    <property type="term" value="F:magnesium ion binding"/>
    <property type="evidence" value="ECO:0007669"/>
    <property type="project" value="UniProtKB-UniRule"/>
</dbReference>
<dbReference type="GO" id="GO:0004775">
    <property type="term" value="F:succinate-CoA ligase (ADP-forming) activity"/>
    <property type="evidence" value="ECO:0007669"/>
    <property type="project" value="UniProtKB-UniRule"/>
</dbReference>
<dbReference type="GO" id="GO:0004776">
    <property type="term" value="F:succinate-CoA ligase (GDP-forming) activity"/>
    <property type="evidence" value="ECO:0007669"/>
    <property type="project" value="RHEA"/>
</dbReference>
<dbReference type="GO" id="GO:0006104">
    <property type="term" value="P:succinyl-CoA metabolic process"/>
    <property type="evidence" value="ECO:0007669"/>
    <property type="project" value="TreeGrafter"/>
</dbReference>
<dbReference type="GO" id="GO:0006099">
    <property type="term" value="P:tricarboxylic acid cycle"/>
    <property type="evidence" value="ECO:0007669"/>
    <property type="project" value="UniProtKB-UniRule"/>
</dbReference>
<dbReference type="FunFam" id="3.30.1490.20:FF:000002">
    <property type="entry name" value="Succinate--CoA ligase [ADP-forming] subunit beta"/>
    <property type="match status" value="1"/>
</dbReference>
<dbReference type="FunFam" id="3.30.470.20:FF:000002">
    <property type="entry name" value="Succinate--CoA ligase [ADP-forming] subunit beta"/>
    <property type="match status" value="1"/>
</dbReference>
<dbReference type="FunFam" id="3.40.50.261:FF:000001">
    <property type="entry name" value="Succinate--CoA ligase [ADP-forming] subunit beta"/>
    <property type="match status" value="1"/>
</dbReference>
<dbReference type="Gene3D" id="3.30.1490.20">
    <property type="entry name" value="ATP-grasp fold, A domain"/>
    <property type="match status" value="1"/>
</dbReference>
<dbReference type="Gene3D" id="3.30.470.20">
    <property type="entry name" value="ATP-grasp fold, B domain"/>
    <property type="match status" value="1"/>
</dbReference>
<dbReference type="Gene3D" id="3.40.50.261">
    <property type="entry name" value="Succinyl-CoA synthetase domains"/>
    <property type="match status" value="1"/>
</dbReference>
<dbReference type="HAMAP" id="MF_00558">
    <property type="entry name" value="Succ_CoA_beta"/>
    <property type="match status" value="1"/>
</dbReference>
<dbReference type="InterPro" id="IPR011761">
    <property type="entry name" value="ATP-grasp"/>
</dbReference>
<dbReference type="InterPro" id="IPR013650">
    <property type="entry name" value="ATP-grasp_succ-CoA_synth-type"/>
</dbReference>
<dbReference type="InterPro" id="IPR013815">
    <property type="entry name" value="ATP_grasp_subdomain_1"/>
</dbReference>
<dbReference type="InterPro" id="IPR017866">
    <property type="entry name" value="Succ-CoA_synthase_bsu_CS"/>
</dbReference>
<dbReference type="InterPro" id="IPR005811">
    <property type="entry name" value="SUCC_ACL_C"/>
</dbReference>
<dbReference type="InterPro" id="IPR005809">
    <property type="entry name" value="Succ_CoA_ligase-like_bsu"/>
</dbReference>
<dbReference type="InterPro" id="IPR016102">
    <property type="entry name" value="Succinyl-CoA_synth-like"/>
</dbReference>
<dbReference type="NCBIfam" id="NF001913">
    <property type="entry name" value="PRK00696.1"/>
    <property type="match status" value="1"/>
</dbReference>
<dbReference type="NCBIfam" id="TIGR01016">
    <property type="entry name" value="sucCoAbeta"/>
    <property type="match status" value="1"/>
</dbReference>
<dbReference type="PANTHER" id="PTHR11815:SF10">
    <property type="entry name" value="SUCCINATE--COA LIGASE [GDP-FORMING] SUBUNIT BETA, MITOCHONDRIAL"/>
    <property type="match status" value="1"/>
</dbReference>
<dbReference type="PANTHER" id="PTHR11815">
    <property type="entry name" value="SUCCINYL-COA SYNTHETASE BETA CHAIN"/>
    <property type="match status" value="1"/>
</dbReference>
<dbReference type="Pfam" id="PF08442">
    <property type="entry name" value="ATP-grasp_2"/>
    <property type="match status" value="1"/>
</dbReference>
<dbReference type="Pfam" id="PF00549">
    <property type="entry name" value="Ligase_CoA"/>
    <property type="match status" value="1"/>
</dbReference>
<dbReference type="PIRSF" id="PIRSF001554">
    <property type="entry name" value="SucCS_beta"/>
    <property type="match status" value="1"/>
</dbReference>
<dbReference type="SUPFAM" id="SSF56059">
    <property type="entry name" value="Glutathione synthetase ATP-binding domain-like"/>
    <property type="match status" value="1"/>
</dbReference>
<dbReference type="SUPFAM" id="SSF52210">
    <property type="entry name" value="Succinyl-CoA synthetase domains"/>
    <property type="match status" value="1"/>
</dbReference>
<dbReference type="PROSITE" id="PS50975">
    <property type="entry name" value="ATP_GRASP"/>
    <property type="match status" value="1"/>
</dbReference>
<dbReference type="PROSITE" id="PS01217">
    <property type="entry name" value="SUCCINYL_COA_LIG_3"/>
    <property type="match status" value="1"/>
</dbReference>
<keyword id="KW-0067">ATP-binding</keyword>
<keyword id="KW-0436">Ligase</keyword>
<keyword id="KW-0460">Magnesium</keyword>
<keyword id="KW-0479">Metal-binding</keyword>
<keyword id="KW-0547">Nucleotide-binding</keyword>
<keyword id="KW-1185">Reference proteome</keyword>
<keyword id="KW-0816">Tricarboxylic acid cycle</keyword>
<organism>
    <name type="scientific">Nitratiruptor sp. (strain SB155-2)</name>
    <dbReference type="NCBI Taxonomy" id="387092"/>
    <lineage>
        <taxon>Bacteria</taxon>
        <taxon>Pseudomonadati</taxon>
        <taxon>Campylobacterota</taxon>
        <taxon>Epsilonproteobacteria</taxon>
        <taxon>Nautiliales</taxon>
        <taxon>Nitratiruptoraceae</taxon>
        <taxon>Nitratiruptor</taxon>
    </lineage>
</organism>
<name>SUCC_NITSB</name>
<evidence type="ECO:0000255" key="1">
    <source>
        <dbReference type="HAMAP-Rule" id="MF_00558"/>
    </source>
</evidence>
<proteinExistence type="inferred from homology"/>
<reference key="1">
    <citation type="journal article" date="2007" name="Proc. Natl. Acad. Sci. U.S.A.">
        <title>Deep-sea vent epsilon-proteobacterial genomes provide insights into emergence of pathogens.</title>
        <authorList>
            <person name="Nakagawa S."/>
            <person name="Takaki Y."/>
            <person name="Shimamura S."/>
            <person name="Reysenbach A.-L."/>
            <person name="Takai K."/>
            <person name="Horikoshi K."/>
        </authorList>
    </citation>
    <scope>NUCLEOTIDE SEQUENCE [LARGE SCALE GENOMIC DNA]</scope>
    <source>
        <strain>SB155-2</strain>
    </source>
</reference>
<protein>
    <recommendedName>
        <fullName evidence="1">Succinate--CoA ligase [ADP-forming] subunit beta</fullName>
        <ecNumber evidence="1">6.2.1.5</ecNumber>
    </recommendedName>
    <alternativeName>
        <fullName evidence="1">Succinyl-CoA synthetase subunit beta</fullName>
        <shortName evidence="1">SCS-beta</shortName>
    </alternativeName>
</protein>